<dbReference type="EC" id="2.4.1.18" evidence="1"/>
<dbReference type="EMBL" id="CP000435">
    <property type="protein sequence ID" value="ABI47007.1"/>
    <property type="molecule type" value="Genomic_DNA"/>
</dbReference>
<dbReference type="RefSeq" id="WP_011619803.1">
    <property type="nucleotide sequence ID" value="NC_008319.1"/>
</dbReference>
<dbReference type="SMR" id="Q0I8Y2"/>
<dbReference type="STRING" id="64471.sync_1886"/>
<dbReference type="CAZy" id="CBM48">
    <property type="family name" value="Carbohydrate-Binding Module Family 48"/>
</dbReference>
<dbReference type="CAZy" id="GH13">
    <property type="family name" value="Glycoside Hydrolase Family 13"/>
</dbReference>
<dbReference type="KEGG" id="syg:sync_1886"/>
<dbReference type="eggNOG" id="COG0296">
    <property type="taxonomic scope" value="Bacteria"/>
</dbReference>
<dbReference type="HOGENOM" id="CLU_004245_3_2_3"/>
<dbReference type="OrthoDB" id="9800174at2"/>
<dbReference type="UniPathway" id="UPA00164"/>
<dbReference type="Proteomes" id="UP000001961">
    <property type="component" value="Chromosome"/>
</dbReference>
<dbReference type="GO" id="GO:0005829">
    <property type="term" value="C:cytosol"/>
    <property type="evidence" value="ECO:0007669"/>
    <property type="project" value="TreeGrafter"/>
</dbReference>
<dbReference type="GO" id="GO:0003844">
    <property type="term" value="F:1,4-alpha-glucan branching enzyme activity"/>
    <property type="evidence" value="ECO:0007669"/>
    <property type="project" value="UniProtKB-UniRule"/>
</dbReference>
<dbReference type="GO" id="GO:0043169">
    <property type="term" value="F:cation binding"/>
    <property type="evidence" value="ECO:0007669"/>
    <property type="project" value="InterPro"/>
</dbReference>
<dbReference type="GO" id="GO:0004553">
    <property type="term" value="F:hydrolase activity, hydrolyzing O-glycosyl compounds"/>
    <property type="evidence" value="ECO:0007669"/>
    <property type="project" value="InterPro"/>
</dbReference>
<dbReference type="GO" id="GO:0005978">
    <property type="term" value="P:glycogen biosynthetic process"/>
    <property type="evidence" value="ECO:0007669"/>
    <property type="project" value="UniProtKB-UniRule"/>
</dbReference>
<dbReference type="CDD" id="cd11322">
    <property type="entry name" value="AmyAc_Glg_BE"/>
    <property type="match status" value="1"/>
</dbReference>
<dbReference type="CDD" id="cd02855">
    <property type="entry name" value="E_set_GBE_prok_N"/>
    <property type="match status" value="1"/>
</dbReference>
<dbReference type="FunFam" id="2.60.40.10:FF:000169">
    <property type="entry name" value="1,4-alpha-glucan branching enzyme GlgB"/>
    <property type="match status" value="1"/>
</dbReference>
<dbReference type="FunFam" id="2.60.40.1180:FF:000002">
    <property type="entry name" value="1,4-alpha-glucan branching enzyme GlgB"/>
    <property type="match status" value="1"/>
</dbReference>
<dbReference type="FunFam" id="3.20.20.80:FF:000003">
    <property type="entry name" value="1,4-alpha-glucan branching enzyme GlgB"/>
    <property type="match status" value="1"/>
</dbReference>
<dbReference type="Gene3D" id="3.20.20.80">
    <property type="entry name" value="Glycosidases"/>
    <property type="match status" value="1"/>
</dbReference>
<dbReference type="Gene3D" id="2.60.40.1180">
    <property type="entry name" value="Golgi alpha-mannosidase II"/>
    <property type="match status" value="1"/>
</dbReference>
<dbReference type="Gene3D" id="2.60.40.10">
    <property type="entry name" value="Immunoglobulins"/>
    <property type="match status" value="2"/>
</dbReference>
<dbReference type="HAMAP" id="MF_00685">
    <property type="entry name" value="GlgB"/>
    <property type="match status" value="1"/>
</dbReference>
<dbReference type="InterPro" id="IPR006048">
    <property type="entry name" value="A-amylase/branching_C"/>
</dbReference>
<dbReference type="InterPro" id="IPR037439">
    <property type="entry name" value="Branching_enzy"/>
</dbReference>
<dbReference type="InterPro" id="IPR006407">
    <property type="entry name" value="GlgB"/>
</dbReference>
<dbReference type="InterPro" id="IPR054169">
    <property type="entry name" value="GlgB_N"/>
</dbReference>
<dbReference type="InterPro" id="IPR044143">
    <property type="entry name" value="GlgB_N_E_set_prok"/>
</dbReference>
<dbReference type="InterPro" id="IPR006047">
    <property type="entry name" value="Glyco_hydro_13_cat_dom"/>
</dbReference>
<dbReference type="InterPro" id="IPR004193">
    <property type="entry name" value="Glyco_hydro_13_N"/>
</dbReference>
<dbReference type="InterPro" id="IPR013780">
    <property type="entry name" value="Glyco_hydro_b"/>
</dbReference>
<dbReference type="InterPro" id="IPR017853">
    <property type="entry name" value="Glycoside_hydrolase_SF"/>
</dbReference>
<dbReference type="InterPro" id="IPR013783">
    <property type="entry name" value="Ig-like_fold"/>
</dbReference>
<dbReference type="InterPro" id="IPR014756">
    <property type="entry name" value="Ig_E-set"/>
</dbReference>
<dbReference type="NCBIfam" id="TIGR01515">
    <property type="entry name" value="branching_enzym"/>
    <property type="match status" value="1"/>
</dbReference>
<dbReference type="NCBIfam" id="NF003811">
    <property type="entry name" value="PRK05402.1"/>
    <property type="match status" value="1"/>
</dbReference>
<dbReference type="NCBIfam" id="NF008967">
    <property type="entry name" value="PRK12313.1"/>
    <property type="match status" value="1"/>
</dbReference>
<dbReference type="PANTHER" id="PTHR43651">
    <property type="entry name" value="1,4-ALPHA-GLUCAN-BRANCHING ENZYME"/>
    <property type="match status" value="1"/>
</dbReference>
<dbReference type="PANTHER" id="PTHR43651:SF3">
    <property type="entry name" value="1,4-ALPHA-GLUCAN-BRANCHING ENZYME"/>
    <property type="match status" value="1"/>
</dbReference>
<dbReference type="Pfam" id="PF00128">
    <property type="entry name" value="Alpha-amylase"/>
    <property type="match status" value="2"/>
</dbReference>
<dbReference type="Pfam" id="PF02806">
    <property type="entry name" value="Alpha-amylase_C"/>
    <property type="match status" value="1"/>
</dbReference>
<dbReference type="Pfam" id="PF02922">
    <property type="entry name" value="CBM_48"/>
    <property type="match status" value="1"/>
</dbReference>
<dbReference type="Pfam" id="PF22019">
    <property type="entry name" value="GlgB_N"/>
    <property type="match status" value="1"/>
</dbReference>
<dbReference type="PIRSF" id="PIRSF000463">
    <property type="entry name" value="GlgB"/>
    <property type="match status" value="1"/>
</dbReference>
<dbReference type="SMART" id="SM00642">
    <property type="entry name" value="Aamy"/>
    <property type="match status" value="1"/>
</dbReference>
<dbReference type="SUPFAM" id="SSF51445">
    <property type="entry name" value="(Trans)glycosidases"/>
    <property type="match status" value="1"/>
</dbReference>
<dbReference type="SUPFAM" id="SSF81296">
    <property type="entry name" value="E set domains"/>
    <property type="match status" value="2"/>
</dbReference>
<dbReference type="SUPFAM" id="SSF51011">
    <property type="entry name" value="Glycosyl hydrolase domain"/>
    <property type="match status" value="1"/>
</dbReference>
<evidence type="ECO:0000255" key="1">
    <source>
        <dbReference type="HAMAP-Rule" id="MF_00685"/>
    </source>
</evidence>
<protein>
    <recommendedName>
        <fullName evidence="1">1,4-alpha-glucan branching enzyme GlgB</fullName>
        <ecNumber evidence="1">2.4.1.18</ecNumber>
    </recommendedName>
    <alternativeName>
        <fullName evidence="1">1,4-alpha-D-glucan:1,4-alpha-D-glucan 6-glucosyl-transferase</fullName>
    </alternativeName>
    <alternativeName>
        <fullName evidence="1">Alpha-(1-&gt;4)-glucan branching enzyme</fullName>
    </alternativeName>
    <alternativeName>
        <fullName evidence="1">Glycogen branching enzyme</fullName>
        <shortName evidence="1">BE</shortName>
    </alternativeName>
</protein>
<name>GLGB_SYNS3</name>
<reference key="1">
    <citation type="journal article" date="2006" name="Proc. Natl. Acad. Sci. U.S.A.">
        <title>Genome sequence of Synechococcus CC9311: insights into adaptation to a coastal environment.</title>
        <authorList>
            <person name="Palenik B."/>
            <person name="Ren Q."/>
            <person name="Dupont C.L."/>
            <person name="Myers G.S."/>
            <person name="Heidelberg J.F."/>
            <person name="Badger J.H."/>
            <person name="Madupu R."/>
            <person name="Nelson W.C."/>
            <person name="Brinkac L.M."/>
            <person name="Dodson R.J."/>
            <person name="Durkin A.S."/>
            <person name="Daugherty S.C."/>
            <person name="Sullivan S.A."/>
            <person name="Khouri H."/>
            <person name="Mohamoud Y."/>
            <person name="Halpin R."/>
            <person name="Paulsen I.T."/>
        </authorList>
    </citation>
    <scope>NUCLEOTIDE SEQUENCE [LARGE SCALE GENOMIC DNA]</scope>
    <source>
        <strain>CC9311</strain>
    </source>
</reference>
<sequence length="765" mass="88831">MTSAVLDWMVQDSRRLAECRHDHPFSLLGPQQLESGQWVVRAWVPEAETVELILDGERLSMQTPHHPWVFEAECSRDPGHHYKLQIRRGGIEHEQFDPWAFRHEWMGEMDRHLFAEGNHHHIWRRMGAHRCQQGGIQGVMFCLWAPNALTVSVIGNLNSWDGRYHPMQQRLGGIWELFVPELEEGHFYKYEIRTQDGHCYQKADPYGFQHEVRPDTSSIVSHLDGFQWNDDAWINSRDRRNPLDQPISVYEMHLGSWIHASADDPFIEADGTPRPPVPAADLKPGARLLTYPELADRLIPYVKEQGFSHIELMPITEHPFDGSWGYQVTGWYAPTSRYGTPDEFRAFVDRCHAEGIGVIIDWVPGHFPKDSHGLAFFDGCHLYEHADPRIGEHKEWGTLIFNYSRNEVRNFLVANLVFWFDQFHIDGIRVDAVASMLYRDYLRPDGEWLANEHGGRENTEAVRFLQQANHVLFEHFPGALSIAEESTTWPMVTQPTENGGLGFNLKWNMGWMHDMLDYFELDPWFRQFHQNNITFSIWYTYTENFMLALSHDEVVHGKSHLLHKMPGDDWQKYANTRALLAYMWTHPGKKTIFMGMEFGQRAEWNVWGDLQWDLLNYEPHAGVHRMVKELNALYKQEPALWQDDFDQYGFQWIDCNDNRHSVISFMRRESTSGSWLVVVANFTPQSHSHYKVGVPISGFYEEIFNTDAAKYGGSNLGNLGGKPSDEWGIHGYENSLDLCLPPLSLMVFKHDPKKSLAEVTNKERA</sequence>
<feature type="chain" id="PRO_0000260705" description="1,4-alpha-glucan branching enzyme GlgB">
    <location>
        <begin position="1"/>
        <end position="765"/>
    </location>
</feature>
<feature type="active site" description="Nucleophile" evidence="1">
    <location>
        <position position="431"/>
    </location>
</feature>
<feature type="active site" description="Proton donor" evidence="1">
    <location>
        <position position="484"/>
    </location>
</feature>
<proteinExistence type="inferred from homology"/>
<comment type="function">
    <text evidence="1">Catalyzes the formation of the alpha-1,6-glucosidic linkages in glycogen by scission of a 1,4-alpha-linked oligosaccharide from growing alpha-1,4-glucan chains and the subsequent attachment of the oligosaccharide to the alpha-1,6 position.</text>
</comment>
<comment type="catalytic activity">
    <reaction evidence="1">
        <text>Transfers a segment of a (1-&gt;4)-alpha-D-glucan chain to a primary hydroxy group in a similar glucan chain.</text>
        <dbReference type="EC" id="2.4.1.18"/>
    </reaction>
</comment>
<comment type="pathway">
    <text evidence="1">Glycan biosynthesis; glycogen biosynthesis.</text>
</comment>
<comment type="subunit">
    <text evidence="1">Monomer.</text>
</comment>
<comment type="similarity">
    <text evidence="1">Belongs to the glycosyl hydrolase 13 family. GlgB subfamily.</text>
</comment>
<gene>
    <name evidence="1" type="primary">glgB</name>
    <name type="ordered locus">sync_1886</name>
</gene>
<organism>
    <name type="scientific">Synechococcus sp. (strain CC9311)</name>
    <dbReference type="NCBI Taxonomy" id="64471"/>
    <lineage>
        <taxon>Bacteria</taxon>
        <taxon>Bacillati</taxon>
        <taxon>Cyanobacteriota</taxon>
        <taxon>Cyanophyceae</taxon>
        <taxon>Synechococcales</taxon>
        <taxon>Synechococcaceae</taxon>
        <taxon>Synechococcus</taxon>
    </lineage>
</organism>
<accession>Q0I8Y2</accession>
<keyword id="KW-0119">Carbohydrate metabolism</keyword>
<keyword id="KW-0320">Glycogen biosynthesis</keyword>
<keyword id="KW-0321">Glycogen metabolism</keyword>
<keyword id="KW-0328">Glycosyltransferase</keyword>
<keyword id="KW-1185">Reference proteome</keyword>
<keyword id="KW-0808">Transferase</keyword>